<protein>
    <recommendedName>
        <fullName evidence="1">Tryptophan synthase beta chain</fullName>
        <ecNumber evidence="1">4.2.1.20</ecNumber>
    </recommendedName>
</protein>
<comment type="function">
    <text evidence="1">The beta subunit is responsible for the synthesis of L-tryptophan from indole and L-serine.</text>
</comment>
<comment type="catalytic activity">
    <reaction evidence="1">
        <text>(1S,2R)-1-C-(indol-3-yl)glycerol 3-phosphate + L-serine = D-glyceraldehyde 3-phosphate + L-tryptophan + H2O</text>
        <dbReference type="Rhea" id="RHEA:10532"/>
        <dbReference type="ChEBI" id="CHEBI:15377"/>
        <dbReference type="ChEBI" id="CHEBI:33384"/>
        <dbReference type="ChEBI" id="CHEBI:57912"/>
        <dbReference type="ChEBI" id="CHEBI:58866"/>
        <dbReference type="ChEBI" id="CHEBI:59776"/>
        <dbReference type="EC" id="4.2.1.20"/>
    </reaction>
</comment>
<comment type="cofactor">
    <cofactor evidence="1">
        <name>pyridoxal 5'-phosphate</name>
        <dbReference type="ChEBI" id="CHEBI:597326"/>
    </cofactor>
</comment>
<comment type="pathway">
    <text evidence="1">Amino-acid biosynthesis; L-tryptophan biosynthesis; L-tryptophan from chorismate: step 5/5.</text>
</comment>
<comment type="subunit">
    <text evidence="1">Tetramer of two alpha and two beta chains.</text>
</comment>
<comment type="similarity">
    <text evidence="1">Belongs to the TrpB family.</text>
</comment>
<name>TRPB_XANAC</name>
<feature type="chain" id="PRO_0000099025" description="Tryptophan synthase beta chain">
    <location>
        <begin position="1"/>
        <end position="405"/>
    </location>
</feature>
<feature type="modified residue" description="N6-(pyridoxal phosphate)lysine" evidence="1">
    <location>
        <position position="98"/>
    </location>
</feature>
<dbReference type="EC" id="4.2.1.20" evidence="1"/>
<dbReference type="EMBL" id="AE008923">
    <property type="protein sequence ID" value="AAM37562.1"/>
    <property type="molecule type" value="Genomic_DNA"/>
</dbReference>
<dbReference type="RefSeq" id="WP_011051782.1">
    <property type="nucleotide sequence ID" value="NC_003919.1"/>
</dbReference>
<dbReference type="SMR" id="Q8PJ28"/>
<dbReference type="KEGG" id="xac:XAC2717"/>
<dbReference type="eggNOG" id="COG0133">
    <property type="taxonomic scope" value="Bacteria"/>
</dbReference>
<dbReference type="HOGENOM" id="CLU_016734_3_1_6"/>
<dbReference type="UniPathway" id="UPA00035">
    <property type="reaction ID" value="UER00044"/>
</dbReference>
<dbReference type="Proteomes" id="UP000000576">
    <property type="component" value="Chromosome"/>
</dbReference>
<dbReference type="GO" id="GO:0005737">
    <property type="term" value="C:cytoplasm"/>
    <property type="evidence" value="ECO:0007669"/>
    <property type="project" value="TreeGrafter"/>
</dbReference>
<dbReference type="GO" id="GO:0004834">
    <property type="term" value="F:tryptophan synthase activity"/>
    <property type="evidence" value="ECO:0007669"/>
    <property type="project" value="UniProtKB-UniRule"/>
</dbReference>
<dbReference type="CDD" id="cd06446">
    <property type="entry name" value="Trp-synth_B"/>
    <property type="match status" value="1"/>
</dbReference>
<dbReference type="FunFam" id="3.40.50.1100:FF:000001">
    <property type="entry name" value="Tryptophan synthase beta chain"/>
    <property type="match status" value="1"/>
</dbReference>
<dbReference type="FunFam" id="3.40.50.1100:FF:000004">
    <property type="entry name" value="Tryptophan synthase beta chain"/>
    <property type="match status" value="1"/>
</dbReference>
<dbReference type="Gene3D" id="3.40.50.1100">
    <property type="match status" value="2"/>
</dbReference>
<dbReference type="HAMAP" id="MF_00133">
    <property type="entry name" value="Trp_synth_beta"/>
    <property type="match status" value="1"/>
</dbReference>
<dbReference type="InterPro" id="IPR006653">
    <property type="entry name" value="Trp_synth_b_CS"/>
</dbReference>
<dbReference type="InterPro" id="IPR006654">
    <property type="entry name" value="Trp_synth_beta"/>
</dbReference>
<dbReference type="InterPro" id="IPR023026">
    <property type="entry name" value="Trp_synth_beta/beta-like"/>
</dbReference>
<dbReference type="InterPro" id="IPR001926">
    <property type="entry name" value="TrpB-like_PALP"/>
</dbReference>
<dbReference type="InterPro" id="IPR036052">
    <property type="entry name" value="TrpB-like_PALP_sf"/>
</dbReference>
<dbReference type="NCBIfam" id="TIGR00263">
    <property type="entry name" value="trpB"/>
    <property type="match status" value="1"/>
</dbReference>
<dbReference type="PANTHER" id="PTHR48077:SF3">
    <property type="entry name" value="TRYPTOPHAN SYNTHASE"/>
    <property type="match status" value="1"/>
</dbReference>
<dbReference type="PANTHER" id="PTHR48077">
    <property type="entry name" value="TRYPTOPHAN SYNTHASE-RELATED"/>
    <property type="match status" value="1"/>
</dbReference>
<dbReference type="Pfam" id="PF00291">
    <property type="entry name" value="PALP"/>
    <property type="match status" value="1"/>
</dbReference>
<dbReference type="PIRSF" id="PIRSF001413">
    <property type="entry name" value="Trp_syn_beta"/>
    <property type="match status" value="1"/>
</dbReference>
<dbReference type="SUPFAM" id="SSF53686">
    <property type="entry name" value="Tryptophan synthase beta subunit-like PLP-dependent enzymes"/>
    <property type="match status" value="1"/>
</dbReference>
<dbReference type="PROSITE" id="PS00168">
    <property type="entry name" value="TRP_SYNTHASE_BETA"/>
    <property type="match status" value="1"/>
</dbReference>
<accession>Q8PJ28</accession>
<organism>
    <name type="scientific">Xanthomonas axonopodis pv. citri (strain 306)</name>
    <dbReference type="NCBI Taxonomy" id="190486"/>
    <lineage>
        <taxon>Bacteria</taxon>
        <taxon>Pseudomonadati</taxon>
        <taxon>Pseudomonadota</taxon>
        <taxon>Gammaproteobacteria</taxon>
        <taxon>Lysobacterales</taxon>
        <taxon>Lysobacteraceae</taxon>
        <taxon>Xanthomonas</taxon>
    </lineage>
</organism>
<sequence>MSAQPISDFYAYPDAAGHFGQFGGRFVAETLIGPLQELSAAYDQARQDPSFIAEYDKDLKHYVGRPSPIYHAERLSREVGGAQILLKREDLNHTGAHKINNTIGQALLASRMGKTRIIAETGAGQHGVASATVAARLGLECVVYMGATDIERQKINVYRMKLLGATVIPVTSGSATLKDALNEAMRDWVTNVRDTFYIIGTVAGPDPYPRMVRDFNAIVGREAREQMLQDYGRLPDAISACVGGGSNAIGLFHAFLNDPGVKIYGAEAAGDGIATGRHAASIAAGRPGVLHGNRTYVICDDDGQITETHSISAGLDYPGVGPEHSFLSDSGRAVYQGITDDEAMAAFHLLAHTEGILAALESSHAVAQSIKLARELPRDALVLCNLSGRGDKDVHTIAAREGIAL</sequence>
<keyword id="KW-0028">Amino-acid biosynthesis</keyword>
<keyword id="KW-0057">Aromatic amino acid biosynthesis</keyword>
<keyword id="KW-0456">Lyase</keyword>
<keyword id="KW-0663">Pyridoxal phosphate</keyword>
<keyword id="KW-0822">Tryptophan biosynthesis</keyword>
<reference key="1">
    <citation type="journal article" date="2002" name="Nature">
        <title>Comparison of the genomes of two Xanthomonas pathogens with differing host specificities.</title>
        <authorList>
            <person name="da Silva A.C.R."/>
            <person name="Ferro J.A."/>
            <person name="Reinach F.C."/>
            <person name="Farah C.S."/>
            <person name="Furlan L.R."/>
            <person name="Quaggio R.B."/>
            <person name="Monteiro-Vitorello C.B."/>
            <person name="Van Sluys M.A."/>
            <person name="Almeida N.F. Jr."/>
            <person name="Alves L.M.C."/>
            <person name="do Amaral A.M."/>
            <person name="Bertolini M.C."/>
            <person name="Camargo L.E.A."/>
            <person name="Camarotte G."/>
            <person name="Cannavan F."/>
            <person name="Cardozo J."/>
            <person name="Chambergo F."/>
            <person name="Ciapina L.P."/>
            <person name="Cicarelli R.M.B."/>
            <person name="Coutinho L.L."/>
            <person name="Cursino-Santos J.R."/>
            <person name="El-Dorry H."/>
            <person name="Faria J.B."/>
            <person name="Ferreira A.J.S."/>
            <person name="Ferreira R.C.C."/>
            <person name="Ferro M.I.T."/>
            <person name="Formighieri E.F."/>
            <person name="Franco M.C."/>
            <person name="Greggio C.C."/>
            <person name="Gruber A."/>
            <person name="Katsuyama A.M."/>
            <person name="Kishi L.T."/>
            <person name="Leite R.P."/>
            <person name="Lemos E.G.M."/>
            <person name="Lemos M.V.F."/>
            <person name="Locali E.C."/>
            <person name="Machado M.A."/>
            <person name="Madeira A.M.B.N."/>
            <person name="Martinez-Rossi N.M."/>
            <person name="Martins E.C."/>
            <person name="Meidanis J."/>
            <person name="Menck C.F.M."/>
            <person name="Miyaki C.Y."/>
            <person name="Moon D.H."/>
            <person name="Moreira L.M."/>
            <person name="Novo M.T.M."/>
            <person name="Okura V.K."/>
            <person name="Oliveira M.C."/>
            <person name="Oliveira V.R."/>
            <person name="Pereira H.A."/>
            <person name="Rossi A."/>
            <person name="Sena J.A.D."/>
            <person name="Silva C."/>
            <person name="de Souza R.F."/>
            <person name="Spinola L.A.F."/>
            <person name="Takita M.A."/>
            <person name="Tamura R.E."/>
            <person name="Teixeira E.C."/>
            <person name="Tezza R.I.D."/>
            <person name="Trindade dos Santos M."/>
            <person name="Truffi D."/>
            <person name="Tsai S.M."/>
            <person name="White F.F."/>
            <person name="Setubal J.C."/>
            <person name="Kitajima J.P."/>
        </authorList>
    </citation>
    <scope>NUCLEOTIDE SEQUENCE [LARGE SCALE GENOMIC DNA]</scope>
    <source>
        <strain>306</strain>
    </source>
</reference>
<evidence type="ECO:0000255" key="1">
    <source>
        <dbReference type="HAMAP-Rule" id="MF_00133"/>
    </source>
</evidence>
<proteinExistence type="inferred from homology"/>
<gene>
    <name evidence="1" type="primary">trpB</name>
    <name type="ordered locus">XAC2717</name>
</gene>